<evidence type="ECO:0000255" key="1">
    <source>
        <dbReference type="HAMAP-Rule" id="MF_00652"/>
    </source>
</evidence>
<name>Y3333_DINSH</name>
<keyword id="KW-1185">Reference proteome</keyword>
<gene>
    <name type="ordered locus">Dshi_3333</name>
</gene>
<accession>A8LNH2</accession>
<organism>
    <name type="scientific">Dinoroseobacter shibae (strain DSM 16493 / NCIMB 14021 / DFL 12)</name>
    <dbReference type="NCBI Taxonomy" id="398580"/>
    <lineage>
        <taxon>Bacteria</taxon>
        <taxon>Pseudomonadati</taxon>
        <taxon>Pseudomonadota</taxon>
        <taxon>Alphaproteobacteria</taxon>
        <taxon>Rhodobacterales</taxon>
        <taxon>Roseobacteraceae</taxon>
        <taxon>Dinoroseobacter</taxon>
    </lineage>
</organism>
<reference key="1">
    <citation type="journal article" date="2010" name="ISME J.">
        <title>The complete genome sequence of the algal symbiont Dinoroseobacter shibae: a hitchhiker's guide to life in the sea.</title>
        <authorList>
            <person name="Wagner-Dobler I."/>
            <person name="Ballhausen B."/>
            <person name="Berger M."/>
            <person name="Brinkhoff T."/>
            <person name="Buchholz I."/>
            <person name="Bunk B."/>
            <person name="Cypionka H."/>
            <person name="Daniel R."/>
            <person name="Drepper T."/>
            <person name="Gerdts G."/>
            <person name="Hahnke S."/>
            <person name="Han C."/>
            <person name="Jahn D."/>
            <person name="Kalhoefer D."/>
            <person name="Kiss H."/>
            <person name="Klenk H.P."/>
            <person name="Kyrpides N."/>
            <person name="Liebl W."/>
            <person name="Liesegang H."/>
            <person name="Meincke L."/>
            <person name="Pati A."/>
            <person name="Petersen J."/>
            <person name="Piekarski T."/>
            <person name="Pommerenke C."/>
            <person name="Pradella S."/>
            <person name="Pukall R."/>
            <person name="Rabus R."/>
            <person name="Stackebrandt E."/>
            <person name="Thole S."/>
            <person name="Thompson L."/>
            <person name="Tielen P."/>
            <person name="Tomasch J."/>
            <person name="von Jan M."/>
            <person name="Wanphrut N."/>
            <person name="Wichels A."/>
            <person name="Zech H."/>
            <person name="Simon M."/>
        </authorList>
    </citation>
    <scope>NUCLEOTIDE SEQUENCE [LARGE SCALE GENOMIC DNA]</scope>
    <source>
        <strain>DSM 16493 / NCIMB 14021 / DFL 12</strain>
    </source>
</reference>
<sequence length="267" mass="29271">MLTVISPAKRLDWDVATPAGATLPEFQDEAMALVDVARELDVADLRKLMGLSEKLAVLNLDRFASFAEQADTETARPAALAFAGDTYTGLEARSLSDDEMAYAQDHLRILSGLYGVLRPLDLIQAYRLEMGSRLATPRGKTLYDWWGDRIATALNRAAEATDGRLLVNCASQEYFGAVDLSALSVPVVTPVFLEDRDGTTKTVSFFAKKARGAMARFIVQNRVRNLDGLRDFETGGYRFVPDQSTETAPVFVRPYPEAAPAARELAS</sequence>
<protein>
    <recommendedName>
        <fullName evidence="1">UPF0246 protein Dshi_3333</fullName>
    </recommendedName>
</protein>
<dbReference type="EMBL" id="CP000830">
    <property type="protein sequence ID" value="ABV95066.1"/>
    <property type="molecule type" value="Genomic_DNA"/>
</dbReference>
<dbReference type="RefSeq" id="WP_012179993.1">
    <property type="nucleotide sequence ID" value="NC_009952.1"/>
</dbReference>
<dbReference type="SMR" id="A8LNH2"/>
<dbReference type="STRING" id="398580.Dshi_3333"/>
<dbReference type="KEGG" id="dsh:Dshi_3333"/>
<dbReference type="eggNOG" id="COG3022">
    <property type="taxonomic scope" value="Bacteria"/>
</dbReference>
<dbReference type="HOGENOM" id="CLU_061989_0_0_5"/>
<dbReference type="OrthoDB" id="9777133at2"/>
<dbReference type="Proteomes" id="UP000006833">
    <property type="component" value="Chromosome"/>
</dbReference>
<dbReference type="GO" id="GO:0005829">
    <property type="term" value="C:cytosol"/>
    <property type="evidence" value="ECO:0007669"/>
    <property type="project" value="TreeGrafter"/>
</dbReference>
<dbReference type="GO" id="GO:0033194">
    <property type="term" value="P:response to hydroperoxide"/>
    <property type="evidence" value="ECO:0007669"/>
    <property type="project" value="TreeGrafter"/>
</dbReference>
<dbReference type="HAMAP" id="MF_00652">
    <property type="entry name" value="UPF0246"/>
    <property type="match status" value="1"/>
</dbReference>
<dbReference type="InterPro" id="IPR005583">
    <property type="entry name" value="YaaA"/>
</dbReference>
<dbReference type="NCBIfam" id="NF002542">
    <property type="entry name" value="PRK02101.1-3"/>
    <property type="match status" value="1"/>
</dbReference>
<dbReference type="PANTHER" id="PTHR30283:SF4">
    <property type="entry name" value="PEROXIDE STRESS RESISTANCE PROTEIN YAAA"/>
    <property type="match status" value="1"/>
</dbReference>
<dbReference type="PANTHER" id="PTHR30283">
    <property type="entry name" value="PEROXIDE STRESS RESPONSE PROTEIN YAAA"/>
    <property type="match status" value="1"/>
</dbReference>
<dbReference type="Pfam" id="PF03883">
    <property type="entry name" value="H2O2_YaaD"/>
    <property type="match status" value="1"/>
</dbReference>
<feature type="chain" id="PRO_1000082765" description="UPF0246 protein Dshi_3333">
    <location>
        <begin position="1"/>
        <end position="267"/>
    </location>
</feature>
<proteinExistence type="inferred from homology"/>
<comment type="similarity">
    <text evidence="1">Belongs to the UPF0246 family.</text>
</comment>